<evidence type="ECO:0000250" key="1">
    <source>
        <dbReference type="UniProtKB" id="P33650"/>
    </source>
</evidence>
<evidence type="ECO:0000255" key="2"/>
<evidence type="ECO:0000255" key="3">
    <source>
        <dbReference type="PROSITE-ProRule" id="PRU01048"/>
    </source>
</evidence>
<evidence type="ECO:0000305" key="4"/>
<accession>Q6G6C4</accession>
<proteinExistence type="inferred from homology"/>
<organism>
    <name type="scientific">Staphylococcus aureus (strain MSSA476)</name>
    <dbReference type="NCBI Taxonomy" id="282459"/>
    <lineage>
        <taxon>Bacteria</taxon>
        <taxon>Bacillati</taxon>
        <taxon>Bacillota</taxon>
        <taxon>Bacilli</taxon>
        <taxon>Bacillales</taxon>
        <taxon>Staphylococcaceae</taxon>
        <taxon>Staphylococcus</taxon>
    </lineage>
</organism>
<gene>
    <name type="primary">feoB</name>
    <name type="ordered locus">SAS2436</name>
</gene>
<keyword id="KW-1003">Cell membrane</keyword>
<keyword id="KW-0342">GTP-binding</keyword>
<keyword id="KW-0406">Ion transport</keyword>
<keyword id="KW-0408">Iron</keyword>
<keyword id="KW-0410">Iron transport</keyword>
<keyword id="KW-0472">Membrane</keyword>
<keyword id="KW-0547">Nucleotide-binding</keyword>
<keyword id="KW-0812">Transmembrane</keyword>
<keyword id="KW-1133">Transmembrane helix</keyword>
<keyword id="KW-0813">Transport</keyword>
<name>FEOB_STAAS</name>
<reference key="1">
    <citation type="journal article" date="2004" name="Proc. Natl. Acad. Sci. U.S.A.">
        <title>Complete genomes of two clinical Staphylococcus aureus strains: evidence for the rapid evolution of virulence and drug resistance.</title>
        <authorList>
            <person name="Holden M.T.G."/>
            <person name="Feil E.J."/>
            <person name="Lindsay J.A."/>
            <person name="Peacock S.J."/>
            <person name="Day N.P.J."/>
            <person name="Enright M.C."/>
            <person name="Foster T.J."/>
            <person name="Moore C.E."/>
            <person name="Hurst L."/>
            <person name="Atkin R."/>
            <person name="Barron A."/>
            <person name="Bason N."/>
            <person name="Bentley S.D."/>
            <person name="Chillingworth C."/>
            <person name="Chillingworth T."/>
            <person name="Churcher C."/>
            <person name="Clark L."/>
            <person name="Corton C."/>
            <person name="Cronin A."/>
            <person name="Doggett J."/>
            <person name="Dowd L."/>
            <person name="Feltwell T."/>
            <person name="Hance Z."/>
            <person name="Harris B."/>
            <person name="Hauser H."/>
            <person name="Holroyd S."/>
            <person name="Jagels K."/>
            <person name="James K.D."/>
            <person name="Lennard N."/>
            <person name="Line A."/>
            <person name="Mayes R."/>
            <person name="Moule S."/>
            <person name="Mungall K."/>
            <person name="Ormond D."/>
            <person name="Quail M.A."/>
            <person name="Rabbinowitsch E."/>
            <person name="Rutherford K.M."/>
            <person name="Sanders M."/>
            <person name="Sharp S."/>
            <person name="Simmonds M."/>
            <person name="Stevens K."/>
            <person name="Whitehead S."/>
            <person name="Barrell B.G."/>
            <person name="Spratt B.G."/>
            <person name="Parkhill J."/>
        </authorList>
    </citation>
    <scope>NUCLEOTIDE SEQUENCE [LARGE SCALE GENOMIC DNA]</scope>
    <source>
        <strain>MSSA476</strain>
    </source>
</reference>
<protein>
    <recommendedName>
        <fullName evidence="4">Fe(2+) transporter FeoB</fullName>
    </recommendedName>
    <alternativeName>
        <fullName>Ferrous iron transport protein B</fullName>
    </alternativeName>
</protein>
<sequence length="664" mass="74517">MENYCILGNPNVGKTSLFNALTGSYEYIGNWSGVTVEKKVGKLKENVGQLIDLPGTYDLSPISKDETVVTDYLLNDSFSGIINIVDASQLKRNMQLTVQLLELNQPIYIGLNMIDVATKRGIKIDYHKLMKKLKTPIFPVVARTGKGTKHLLGEIKHLGEGYQPHFKINYGEKIEETIKNMCQIIMTETSHDKYQARFIAIQFLLNNMQIANELNSEVVNKLSSLRDQVDKQVEAVSVRREMERIRNHYIETLLQDVVTYPDEDKQYFSSRIDKILTHKYIGMPIFLAIMWLIFQTTFTWIGTPLSDQLDAFIGGTFTDSVKTIMNYLGVIPFLQDLITDGIIAGVGSVLVFVPQIVVLFFFISLLEDSGYMARIAVLMDRIMESFGLSGKSFIPMIIGFGCNVPSIMAARSIENEKERLTTILIAPFMSCSARLPVYALFVGIFFKENQSLVVLSLYVLGIIMAFLVSTVLTKTILKNDNAIFIVELPTYRVPSIKTLWRSTWEKAKGFVRKAGTFIFGGSVVIWLLSYVGPHGINVNINQSFLHMVGSFFGMLVQPLGFGTWQAGATLVPGFLAKEVIVSSMAIIYSSGDAGLVNVIQNQFTPLSAYAFMIFILLYIPCVSTVAAIRKETYSWKWTALAVVYPLVTAYVLTFIFYQIGHLFV</sequence>
<feature type="chain" id="PRO_0000210845" description="Fe(2+) transporter FeoB">
    <location>
        <begin position="1"/>
        <end position="664"/>
    </location>
</feature>
<feature type="transmembrane region" description="Helical" evidence="2">
    <location>
        <begin position="281"/>
        <end position="301"/>
    </location>
</feature>
<feature type="transmembrane region" description="Helical" evidence="2">
    <location>
        <begin position="342"/>
        <end position="362"/>
    </location>
</feature>
<feature type="transmembrane region" description="Helical" evidence="2">
    <location>
        <begin position="382"/>
        <end position="402"/>
    </location>
</feature>
<feature type="transmembrane region" description="Helical" evidence="2">
    <location>
        <begin position="425"/>
        <end position="445"/>
    </location>
</feature>
<feature type="transmembrane region" description="Helical" evidence="2">
    <location>
        <begin position="452"/>
        <end position="472"/>
    </location>
</feature>
<feature type="transmembrane region" description="Helical" evidence="2">
    <location>
        <begin position="516"/>
        <end position="536"/>
    </location>
</feature>
<feature type="transmembrane region" description="Helical" evidence="2">
    <location>
        <begin position="544"/>
        <end position="564"/>
    </location>
</feature>
<feature type="transmembrane region" description="Helical" evidence="2">
    <location>
        <begin position="567"/>
        <end position="587"/>
    </location>
</feature>
<feature type="transmembrane region" description="Helical" evidence="2">
    <location>
        <begin position="608"/>
        <end position="628"/>
    </location>
</feature>
<feature type="transmembrane region" description="Helical" evidence="2">
    <location>
        <begin position="637"/>
        <end position="657"/>
    </location>
</feature>
<feature type="domain" description="FeoB-type G" evidence="3">
    <location>
        <begin position="1"/>
        <end position="161"/>
    </location>
</feature>
<feature type="binding site" evidence="3">
    <location>
        <begin position="8"/>
        <end position="15"/>
    </location>
    <ligand>
        <name>GTP</name>
        <dbReference type="ChEBI" id="CHEBI:37565"/>
        <label>1</label>
    </ligand>
</feature>
<feature type="binding site" evidence="3">
    <location>
        <begin position="33"/>
        <end position="37"/>
    </location>
    <ligand>
        <name>GTP</name>
        <dbReference type="ChEBI" id="CHEBI:37565"/>
        <label>2</label>
    </ligand>
</feature>
<feature type="binding site" evidence="3">
    <location>
        <begin position="52"/>
        <end position="55"/>
    </location>
    <ligand>
        <name>GTP</name>
        <dbReference type="ChEBI" id="CHEBI:37565"/>
        <label>3</label>
    </ligand>
</feature>
<feature type="binding site" evidence="3">
    <location>
        <begin position="112"/>
        <end position="115"/>
    </location>
    <ligand>
        <name>GTP</name>
        <dbReference type="ChEBI" id="CHEBI:37565"/>
    </ligand>
</feature>
<feature type="binding site" evidence="3">
    <location>
        <begin position="141"/>
        <end position="143"/>
    </location>
    <ligand>
        <name>GTP</name>
        <dbReference type="ChEBI" id="CHEBI:37565"/>
    </ligand>
</feature>
<dbReference type="EMBL" id="BX571857">
    <property type="protein sequence ID" value="CAG44252.1"/>
    <property type="molecule type" value="Genomic_DNA"/>
</dbReference>
<dbReference type="RefSeq" id="WP_000432897.1">
    <property type="nucleotide sequence ID" value="NC_002953.3"/>
</dbReference>
<dbReference type="SMR" id="Q6G6C4"/>
<dbReference type="KEGG" id="sas:SAS2436"/>
<dbReference type="HOGENOM" id="CLU_013350_3_0_9"/>
<dbReference type="GO" id="GO:0005886">
    <property type="term" value="C:plasma membrane"/>
    <property type="evidence" value="ECO:0007669"/>
    <property type="project" value="UniProtKB-SubCell"/>
</dbReference>
<dbReference type="GO" id="GO:0015093">
    <property type="term" value="F:ferrous iron transmembrane transporter activity"/>
    <property type="evidence" value="ECO:0007669"/>
    <property type="project" value="InterPro"/>
</dbReference>
<dbReference type="GO" id="GO:0005525">
    <property type="term" value="F:GTP binding"/>
    <property type="evidence" value="ECO:0007669"/>
    <property type="project" value="UniProtKB-KW"/>
</dbReference>
<dbReference type="CDD" id="cd01879">
    <property type="entry name" value="FeoB"/>
    <property type="match status" value="1"/>
</dbReference>
<dbReference type="FunFam" id="3.40.50.300:FF:001475">
    <property type="entry name" value="Ferrous iron transport protein B"/>
    <property type="match status" value="1"/>
</dbReference>
<dbReference type="Gene3D" id="1.10.287.1770">
    <property type="match status" value="1"/>
</dbReference>
<dbReference type="Gene3D" id="3.40.50.300">
    <property type="entry name" value="P-loop containing nucleotide triphosphate hydrolases"/>
    <property type="match status" value="1"/>
</dbReference>
<dbReference type="InterPro" id="IPR003373">
    <property type="entry name" value="Fe2_transport_prot-B"/>
</dbReference>
<dbReference type="InterPro" id="IPR011640">
    <property type="entry name" value="Fe2_transport_prot_B_C"/>
</dbReference>
<dbReference type="InterPro" id="IPR041069">
    <property type="entry name" value="FeoB_Cyto"/>
</dbReference>
<dbReference type="InterPro" id="IPR050860">
    <property type="entry name" value="FeoB_GTPase"/>
</dbReference>
<dbReference type="InterPro" id="IPR030389">
    <property type="entry name" value="G_FEOB_dom"/>
</dbReference>
<dbReference type="InterPro" id="IPR011642">
    <property type="entry name" value="Gate_dom"/>
</dbReference>
<dbReference type="InterPro" id="IPR027417">
    <property type="entry name" value="P-loop_NTPase"/>
</dbReference>
<dbReference type="NCBIfam" id="TIGR00437">
    <property type="entry name" value="feoB"/>
    <property type="match status" value="1"/>
</dbReference>
<dbReference type="PANTHER" id="PTHR43185:SF1">
    <property type="entry name" value="FE(2+) TRANSPORTER FEOB"/>
    <property type="match status" value="1"/>
</dbReference>
<dbReference type="PANTHER" id="PTHR43185">
    <property type="entry name" value="FERROUS IRON TRANSPORT PROTEIN B"/>
    <property type="match status" value="1"/>
</dbReference>
<dbReference type="Pfam" id="PF07664">
    <property type="entry name" value="FeoB_C"/>
    <property type="match status" value="1"/>
</dbReference>
<dbReference type="Pfam" id="PF17910">
    <property type="entry name" value="FeoB_Cyto"/>
    <property type="match status" value="1"/>
</dbReference>
<dbReference type="Pfam" id="PF02421">
    <property type="entry name" value="FeoB_N"/>
    <property type="match status" value="1"/>
</dbReference>
<dbReference type="Pfam" id="PF07670">
    <property type="entry name" value="Gate"/>
    <property type="match status" value="2"/>
</dbReference>
<dbReference type="SUPFAM" id="SSF52540">
    <property type="entry name" value="P-loop containing nucleoside triphosphate hydrolases"/>
    <property type="match status" value="1"/>
</dbReference>
<dbReference type="PROSITE" id="PS51711">
    <property type="entry name" value="G_FEOB"/>
    <property type="match status" value="1"/>
</dbReference>
<comment type="function">
    <text evidence="1">Probable transporter of a GTP-driven Fe(2+) uptake system.</text>
</comment>
<comment type="subcellular location">
    <subcellularLocation>
        <location evidence="4">Cell membrane</location>
        <topology evidence="2">Multi-pass membrane protein</topology>
    </subcellularLocation>
</comment>
<comment type="similarity">
    <text evidence="3">Belongs to the TRAFAC class TrmE-Era-EngA-EngB-Septin-like GTPase superfamily. FeoB GTPase (TC 9.A.8) family.</text>
</comment>